<name>MRAY_BACAN</name>
<proteinExistence type="inferred from homology"/>
<organism>
    <name type="scientific">Bacillus anthracis</name>
    <dbReference type="NCBI Taxonomy" id="1392"/>
    <lineage>
        <taxon>Bacteria</taxon>
        <taxon>Bacillati</taxon>
        <taxon>Bacillota</taxon>
        <taxon>Bacilli</taxon>
        <taxon>Bacillales</taxon>
        <taxon>Bacillaceae</taxon>
        <taxon>Bacillus</taxon>
        <taxon>Bacillus cereus group</taxon>
    </lineage>
</organism>
<comment type="function">
    <text evidence="1">Catalyzes the initial step of the lipid cycle reactions in the biosynthesis of the cell wall peptidoglycan: transfers peptidoglycan precursor phospho-MurNAc-pentapeptide from UDP-MurNAc-pentapeptide onto the lipid carrier undecaprenyl phosphate, yielding undecaprenyl-pyrophosphoryl-MurNAc-pentapeptide, known as lipid I.</text>
</comment>
<comment type="catalytic activity">
    <reaction evidence="1">
        <text>UDP-N-acetyl-alpha-D-muramoyl-L-alanyl-gamma-D-glutamyl-meso-2,6-diaminopimeloyl-D-alanyl-D-alanine + di-trans,octa-cis-undecaprenyl phosphate = di-trans,octa-cis-undecaprenyl diphospho-N-acetyl-alpha-D-muramoyl-L-alanyl-D-glutamyl-meso-2,6-diaminopimeloyl-D-alanyl-D-alanine + UMP</text>
        <dbReference type="Rhea" id="RHEA:28386"/>
        <dbReference type="ChEBI" id="CHEBI:57865"/>
        <dbReference type="ChEBI" id="CHEBI:60392"/>
        <dbReference type="ChEBI" id="CHEBI:61386"/>
        <dbReference type="ChEBI" id="CHEBI:61387"/>
        <dbReference type="EC" id="2.7.8.13"/>
    </reaction>
</comment>
<comment type="cofactor">
    <cofactor evidence="1">
        <name>Mg(2+)</name>
        <dbReference type="ChEBI" id="CHEBI:18420"/>
    </cofactor>
</comment>
<comment type="pathway">
    <text evidence="1">Cell wall biogenesis; peptidoglycan biosynthesis.</text>
</comment>
<comment type="subcellular location">
    <subcellularLocation>
        <location evidence="1">Cell membrane</location>
        <topology evidence="1">Multi-pass membrane protein</topology>
    </subcellularLocation>
</comment>
<comment type="similarity">
    <text evidence="1">Belongs to the glycosyltransferase 4 family. MraY subfamily.</text>
</comment>
<accession>Q81WC8</accession>
<accession>Q6HUH3</accession>
<accession>Q6KNQ9</accession>
<feature type="chain" id="PRO_0000108774" description="Phospho-N-acetylmuramoyl-pentapeptide-transferase">
    <location>
        <begin position="1"/>
        <end position="324"/>
    </location>
</feature>
<feature type="transmembrane region" description="Helical" evidence="1">
    <location>
        <begin position="5"/>
        <end position="25"/>
    </location>
</feature>
<feature type="transmembrane region" description="Helical" evidence="1">
    <location>
        <begin position="52"/>
        <end position="72"/>
    </location>
</feature>
<feature type="transmembrane region" description="Helical" evidence="1">
    <location>
        <begin position="77"/>
        <end position="97"/>
    </location>
</feature>
<feature type="transmembrane region" description="Helical" evidence="1">
    <location>
        <begin position="122"/>
        <end position="142"/>
    </location>
</feature>
<feature type="transmembrane region" description="Helical" evidence="1">
    <location>
        <begin position="149"/>
        <end position="169"/>
    </location>
</feature>
<feature type="transmembrane region" description="Helical" evidence="1">
    <location>
        <begin position="176"/>
        <end position="196"/>
    </location>
</feature>
<feature type="transmembrane region" description="Helical" evidence="1">
    <location>
        <begin position="201"/>
        <end position="221"/>
    </location>
</feature>
<feature type="transmembrane region" description="Helical" evidence="1">
    <location>
        <begin position="227"/>
        <end position="247"/>
    </location>
</feature>
<feature type="transmembrane region" description="Helical" evidence="1">
    <location>
        <begin position="253"/>
        <end position="273"/>
    </location>
</feature>
<feature type="transmembrane region" description="Helical" evidence="1">
    <location>
        <begin position="302"/>
        <end position="322"/>
    </location>
</feature>
<sequence>MLEQGLLVTAGVAFLISVALSPLFIPFLRKLKFGQSIRDEGPKSHQKKSGTPTMGGIVIYVSMMVTSLIMAIKFNHLGAEVSLLLLVTFGYGLIGFLDDYIKVVKKRNLGLTSKQKLVGQLVIAIAFFFIGKGQAFHTYIMIPGTDVKFELGWAYFVLVLFMLIGGSNAVNLTDGLDGLLSGTAAIAFGAFSIIAVAQEQFGVAIFCMAVVGAVLGFLVFNANPAEVFMGDTGSLALGGAIAAVAILLKQELLLVIIGGVFVMETLSVIIQVISFKTTGKRVFKMSPLHHHYELCGWSEWRVVVTFWSVGFLLAVLGIYIGVWM</sequence>
<keyword id="KW-0131">Cell cycle</keyword>
<keyword id="KW-0132">Cell division</keyword>
<keyword id="KW-1003">Cell membrane</keyword>
<keyword id="KW-0133">Cell shape</keyword>
<keyword id="KW-0961">Cell wall biogenesis/degradation</keyword>
<keyword id="KW-0460">Magnesium</keyword>
<keyword id="KW-0472">Membrane</keyword>
<keyword id="KW-0479">Metal-binding</keyword>
<keyword id="KW-0573">Peptidoglycan synthesis</keyword>
<keyword id="KW-1185">Reference proteome</keyword>
<keyword id="KW-0808">Transferase</keyword>
<keyword id="KW-0812">Transmembrane</keyword>
<keyword id="KW-1133">Transmembrane helix</keyword>
<dbReference type="EC" id="2.7.8.13" evidence="1"/>
<dbReference type="EMBL" id="AE016879">
    <property type="protein sequence ID" value="AAP27778.1"/>
    <property type="molecule type" value="Genomic_DNA"/>
</dbReference>
<dbReference type="EMBL" id="AE017334">
    <property type="protein sequence ID" value="AAT33169.1"/>
    <property type="molecule type" value="Genomic_DNA"/>
</dbReference>
<dbReference type="EMBL" id="AE017225">
    <property type="protein sequence ID" value="AAT56066.1"/>
    <property type="molecule type" value="Genomic_DNA"/>
</dbReference>
<dbReference type="RefSeq" id="NP_846292.1">
    <property type="nucleotide sequence ID" value="NC_003997.3"/>
</dbReference>
<dbReference type="RefSeq" id="WP_000893056.1">
    <property type="nucleotide sequence ID" value="NZ_WXXJ01000026.1"/>
</dbReference>
<dbReference type="RefSeq" id="YP_030015.1">
    <property type="nucleotide sequence ID" value="NC_005945.1"/>
</dbReference>
<dbReference type="SMR" id="Q81WC8"/>
<dbReference type="STRING" id="261594.GBAA_4052"/>
<dbReference type="DNASU" id="1087475"/>
<dbReference type="GeneID" id="45023742"/>
<dbReference type="KEGG" id="ban:BA_4052"/>
<dbReference type="KEGG" id="bar:GBAA_4052"/>
<dbReference type="KEGG" id="bat:BAS3764"/>
<dbReference type="PATRIC" id="fig|198094.11.peg.4023"/>
<dbReference type="eggNOG" id="COG0472">
    <property type="taxonomic scope" value="Bacteria"/>
</dbReference>
<dbReference type="HOGENOM" id="CLU_023982_0_1_9"/>
<dbReference type="OMA" id="DTPTMGG"/>
<dbReference type="OrthoDB" id="9805475at2"/>
<dbReference type="UniPathway" id="UPA00219"/>
<dbReference type="Proteomes" id="UP000000427">
    <property type="component" value="Chromosome"/>
</dbReference>
<dbReference type="Proteomes" id="UP000000594">
    <property type="component" value="Chromosome"/>
</dbReference>
<dbReference type="GO" id="GO:0005886">
    <property type="term" value="C:plasma membrane"/>
    <property type="evidence" value="ECO:0007669"/>
    <property type="project" value="UniProtKB-SubCell"/>
</dbReference>
<dbReference type="GO" id="GO:0046872">
    <property type="term" value="F:metal ion binding"/>
    <property type="evidence" value="ECO:0007669"/>
    <property type="project" value="UniProtKB-KW"/>
</dbReference>
<dbReference type="GO" id="GO:0008963">
    <property type="term" value="F:phospho-N-acetylmuramoyl-pentapeptide-transferase activity"/>
    <property type="evidence" value="ECO:0007669"/>
    <property type="project" value="UniProtKB-UniRule"/>
</dbReference>
<dbReference type="GO" id="GO:0051992">
    <property type="term" value="F:UDP-N-acetylmuramoyl-L-alanyl-D-glutamyl-meso-2,6-diaminopimelyl-D-alanyl-D-alanine:undecaprenyl-phosphate transferase activity"/>
    <property type="evidence" value="ECO:0007669"/>
    <property type="project" value="RHEA"/>
</dbReference>
<dbReference type="GO" id="GO:0051301">
    <property type="term" value="P:cell division"/>
    <property type="evidence" value="ECO:0007669"/>
    <property type="project" value="UniProtKB-KW"/>
</dbReference>
<dbReference type="GO" id="GO:0071555">
    <property type="term" value="P:cell wall organization"/>
    <property type="evidence" value="ECO:0007669"/>
    <property type="project" value="UniProtKB-KW"/>
</dbReference>
<dbReference type="GO" id="GO:0009252">
    <property type="term" value="P:peptidoglycan biosynthetic process"/>
    <property type="evidence" value="ECO:0007669"/>
    <property type="project" value="UniProtKB-UniRule"/>
</dbReference>
<dbReference type="GO" id="GO:0008360">
    <property type="term" value="P:regulation of cell shape"/>
    <property type="evidence" value="ECO:0007669"/>
    <property type="project" value="UniProtKB-KW"/>
</dbReference>
<dbReference type="CDD" id="cd06852">
    <property type="entry name" value="GT_MraY"/>
    <property type="match status" value="1"/>
</dbReference>
<dbReference type="HAMAP" id="MF_00038">
    <property type="entry name" value="MraY"/>
    <property type="match status" value="1"/>
</dbReference>
<dbReference type="InterPro" id="IPR000715">
    <property type="entry name" value="Glycosyl_transferase_4"/>
</dbReference>
<dbReference type="InterPro" id="IPR003524">
    <property type="entry name" value="PNAcMuramoyl-5peptid_Trfase"/>
</dbReference>
<dbReference type="InterPro" id="IPR018480">
    <property type="entry name" value="PNAcMuramoyl-5peptid_Trfase_CS"/>
</dbReference>
<dbReference type="NCBIfam" id="TIGR00445">
    <property type="entry name" value="mraY"/>
    <property type="match status" value="1"/>
</dbReference>
<dbReference type="PANTHER" id="PTHR22926">
    <property type="entry name" value="PHOSPHO-N-ACETYLMURAMOYL-PENTAPEPTIDE-TRANSFERASE"/>
    <property type="match status" value="1"/>
</dbReference>
<dbReference type="PANTHER" id="PTHR22926:SF5">
    <property type="entry name" value="PHOSPHO-N-ACETYLMURAMOYL-PENTAPEPTIDE-TRANSFERASE HOMOLOG"/>
    <property type="match status" value="1"/>
</dbReference>
<dbReference type="Pfam" id="PF00953">
    <property type="entry name" value="Glycos_transf_4"/>
    <property type="match status" value="1"/>
</dbReference>
<dbReference type="Pfam" id="PF10555">
    <property type="entry name" value="MraY_sig1"/>
    <property type="match status" value="1"/>
</dbReference>
<dbReference type="PROSITE" id="PS01348">
    <property type="entry name" value="MRAY_2"/>
    <property type="match status" value="1"/>
</dbReference>
<evidence type="ECO:0000255" key="1">
    <source>
        <dbReference type="HAMAP-Rule" id="MF_00038"/>
    </source>
</evidence>
<reference key="1">
    <citation type="journal article" date="2003" name="Nature">
        <title>The genome sequence of Bacillus anthracis Ames and comparison to closely related bacteria.</title>
        <authorList>
            <person name="Read T.D."/>
            <person name="Peterson S.N."/>
            <person name="Tourasse N.J."/>
            <person name="Baillie L.W."/>
            <person name="Paulsen I.T."/>
            <person name="Nelson K.E."/>
            <person name="Tettelin H."/>
            <person name="Fouts D.E."/>
            <person name="Eisen J.A."/>
            <person name="Gill S.R."/>
            <person name="Holtzapple E.K."/>
            <person name="Okstad O.A."/>
            <person name="Helgason E."/>
            <person name="Rilstone J."/>
            <person name="Wu M."/>
            <person name="Kolonay J.F."/>
            <person name="Beanan M.J."/>
            <person name="Dodson R.J."/>
            <person name="Brinkac L.M."/>
            <person name="Gwinn M.L."/>
            <person name="DeBoy R.T."/>
            <person name="Madpu R."/>
            <person name="Daugherty S.C."/>
            <person name="Durkin A.S."/>
            <person name="Haft D.H."/>
            <person name="Nelson W.C."/>
            <person name="Peterson J.D."/>
            <person name="Pop M."/>
            <person name="Khouri H.M."/>
            <person name="Radune D."/>
            <person name="Benton J.L."/>
            <person name="Mahamoud Y."/>
            <person name="Jiang L."/>
            <person name="Hance I.R."/>
            <person name="Weidman J.F."/>
            <person name="Berry K.J."/>
            <person name="Plaut R.D."/>
            <person name="Wolf A.M."/>
            <person name="Watkins K.L."/>
            <person name="Nierman W.C."/>
            <person name="Hazen A."/>
            <person name="Cline R.T."/>
            <person name="Redmond C."/>
            <person name="Thwaite J.E."/>
            <person name="White O."/>
            <person name="Salzberg S.L."/>
            <person name="Thomason B."/>
            <person name="Friedlander A.M."/>
            <person name="Koehler T.M."/>
            <person name="Hanna P.C."/>
            <person name="Kolstoe A.-B."/>
            <person name="Fraser C.M."/>
        </authorList>
    </citation>
    <scope>NUCLEOTIDE SEQUENCE [LARGE SCALE GENOMIC DNA]</scope>
    <source>
        <strain>Ames / isolate Porton</strain>
    </source>
</reference>
<reference key="2">
    <citation type="journal article" date="2009" name="J. Bacteriol.">
        <title>The complete genome sequence of Bacillus anthracis Ames 'Ancestor'.</title>
        <authorList>
            <person name="Ravel J."/>
            <person name="Jiang L."/>
            <person name="Stanley S.T."/>
            <person name="Wilson M.R."/>
            <person name="Decker R.S."/>
            <person name="Read T.D."/>
            <person name="Worsham P."/>
            <person name="Keim P.S."/>
            <person name="Salzberg S.L."/>
            <person name="Fraser-Liggett C.M."/>
            <person name="Rasko D.A."/>
        </authorList>
    </citation>
    <scope>NUCLEOTIDE SEQUENCE [LARGE SCALE GENOMIC DNA]</scope>
    <source>
        <strain>Ames ancestor</strain>
    </source>
</reference>
<reference key="3">
    <citation type="submission" date="2004-01" db="EMBL/GenBank/DDBJ databases">
        <title>Complete genome sequence of Bacillus anthracis Sterne.</title>
        <authorList>
            <person name="Brettin T.S."/>
            <person name="Bruce D."/>
            <person name="Challacombe J.F."/>
            <person name="Gilna P."/>
            <person name="Han C."/>
            <person name="Hill K."/>
            <person name="Hitchcock P."/>
            <person name="Jackson P."/>
            <person name="Keim P."/>
            <person name="Longmire J."/>
            <person name="Lucas S."/>
            <person name="Okinaka R."/>
            <person name="Richardson P."/>
            <person name="Rubin E."/>
            <person name="Tice H."/>
        </authorList>
    </citation>
    <scope>NUCLEOTIDE SEQUENCE [LARGE SCALE GENOMIC DNA]</scope>
    <source>
        <strain>Sterne</strain>
    </source>
</reference>
<protein>
    <recommendedName>
        <fullName evidence="1">Phospho-N-acetylmuramoyl-pentapeptide-transferase</fullName>
        <ecNumber evidence="1">2.7.8.13</ecNumber>
    </recommendedName>
    <alternativeName>
        <fullName evidence="1">UDP-MurNAc-pentapeptide phosphotransferase</fullName>
    </alternativeName>
</protein>
<gene>
    <name evidence="1" type="primary">mraY</name>
    <name type="ordered locus">BA_4052</name>
    <name type="ordered locus">GBAA_4052</name>
    <name type="ordered locus">BAS3764</name>
</gene>